<protein>
    <recommendedName>
        <fullName evidence="1">ATP synthase subunit alpha</fullName>
        <ecNumber evidence="1">7.1.2.2</ecNumber>
    </recommendedName>
    <alternativeName>
        <fullName evidence="1">ATP synthase F1 sector subunit alpha</fullName>
    </alternativeName>
    <alternativeName>
        <fullName evidence="1">F-ATPase subunit alpha</fullName>
    </alternativeName>
</protein>
<proteinExistence type="inferred from homology"/>
<name>ATPA_BEUC1</name>
<accession>C5C1U6</accession>
<reference key="1">
    <citation type="journal article" date="2009" name="Stand. Genomic Sci.">
        <title>Complete genome sequence of Beutenbergia cavernae type strain (HKI 0122).</title>
        <authorList>
            <person name="Land M."/>
            <person name="Pukall R."/>
            <person name="Abt B."/>
            <person name="Goker M."/>
            <person name="Rohde M."/>
            <person name="Glavina Del Rio T."/>
            <person name="Tice H."/>
            <person name="Copeland A."/>
            <person name="Cheng J.F."/>
            <person name="Lucas S."/>
            <person name="Chen F."/>
            <person name="Nolan M."/>
            <person name="Bruce D."/>
            <person name="Goodwin L."/>
            <person name="Pitluck S."/>
            <person name="Ivanova N."/>
            <person name="Mavromatis K."/>
            <person name="Ovchinnikova G."/>
            <person name="Pati A."/>
            <person name="Chen A."/>
            <person name="Palaniappan K."/>
            <person name="Hauser L."/>
            <person name="Chang Y.J."/>
            <person name="Jefferies C.C."/>
            <person name="Saunders E."/>
            <person name="Brettin T."/>
            <person name="Detter J.C."/>
            <person name="Han C."/>
            <person name="Chain P."/>
            <person name="Bristow J."/>
            <person name="Eisen J.A."/>
            <person name="Markowitz V."/>
            <person name="Hugenholtz P."/>
            <person name="Kyrpides N.C."/>
            <person name="Klenk H.P."/>
            <person name="Lapidus A."/>
        </authorList>
    </citation>
    <scope>NUCLEOTIDE SEQUENCE [LARGE SCALE GENOMIC DNA]</scope>
    <source>
        <strain>ATCC BAA-8 / DSM 12333 / CCUG 43141 / JCM 11478 / NBRC 16432 / NCIMB 13614 / HKI 0122</strain>
    </source>
</reference>
<comment type="function">
    <text evidence="1">Produces ATP from ADP in the presence of a proton gradient across the membrane. The alpha chain is a regulatory subunit.</text>
</comment>
<comment type="catalytic activity">
    <reaction evidence="1">
        <text>ATP + H2O + 4 H(+)(in) = ADP + phosphate + 5 H(+)(out)</text>
        <dbReference type="Rhea" id="RHEA:57720"/>
        <dbReference type="ChEBI" id="CHEBI:15377"/>
        <dbReference type="ChEBI" id="CHEBI:15378"/>
        <dbReference type="ChEBI" id="CHEBI:30616"/>
        <dbReference type="ChEBI" id="CHEBI:43474"/>
        <dbReference type="ChEBI" id="CHEBI:456216"/>
        <dbReference type="EC" id="7.1.2.2"/>
    </reaction>
</comment>
<comment type="subunit">
    <text evidence="1">F-type ATPases have 2 components, CF(1) - the catalytic core - and CF(0) - the membrane proton channel. CF(1) has five subunits: alpha(3), beta(3), gamma(1), delta(1), epsilon(1). CF(0) has three main subunits: a(1), b(2) and c(9-12). The alpha and beta chains form an alternating ring which encloses part of the gamma chain. CF(1) is attached to CF(0) by a central stalk formed by the gamma and epsilon chains, while a peripheral stalk is formed by the delta and b chains.</text>
</comment>
<comment type="subcellular location">
    <subcellularLocation>
        <location evidence="1">Cell membrane</location>
        <topology evidence="1">Peripheral membrane protein</topology>
    </subcellularLocation>
</comment>
<comment type="similarity">
    <text evidence="1">Belongs to the ATPase alpha/beta chains family.</text>
</comment>
<evidence type="ECO:0000255" key="1">
    <source>
        <dbReference type="HAMAP-Rule" id="MF_01346"/>
    </source>
</evidence>
<evidence type="ECO:0000256" key="2">
    <source>
        <dbReference type="SAM" id="MobiDB-lite"/>
    </source>
</evidence>
<dbReference type="EC" id="7.1.2.2" evidence="1"/>
<dbReference type="EMBL" id="CP001618">
    <property type="protein sequence ID" value="ACQ79564.1"/>
    <property type="molecule type" value="Genomic_DNA"/>
</dbReference>
<dbReference type="RefSeq" id="WP_015881804.1">
    <property type="nucleotide sequence ID" value="NC_012669.1"/>
</dbReference>
<dbReference type="SMR" id="C5C1U6"/>
<dbReference type="STRING" id="471853.Bcav_1305"/>
<dbReference type="KEGG" id="bcv:Bcav_1305"/>
<dbReference type="eggNOG" id="COG0056">
    <property type="taxonomic scope" value="Bacteria"/>
</dbReference>
<dbReference type="HOGENOM" id="CLU_010091_2_1_11"/>
<dbReference type="OrthoDB" id="9803053at2"/>
<dbReference type="Proteomes" id="UP000007962">
    <property type="component" value="Chromosome"/>
</dbReference>
<dbReference type="GO" id="GO:0005886">
    <property type="term" value="C:plasma membrane"/>
    <property type="evidence" value="ECO:0007669"/>
    <property type="project" value="UniProtKB-SubCell"/>
</dbReference>
<dbReference type="GO" id="GO:0045259">
    <property type="term" value="C:proton-transporting ATP synthase complex"/>
    <property type="evidence" value="ECO:0007669"/>
    <property type="project" value="UniProtKB-KW"/>
</dbReference>
<dbReference type="GO" id="GO:0043531">
    <property type="term" value="F:ADP binding"/>
    <property type="evidence" value="ECO:0007669"/>
    <property type="project" value="TreeGrafter"/>
</dbReference>
<dbReference type="GO" id="GO:0005524">
    <property type="term" value="F:ATP binding"/>
    <property type="evidence" value="ECO:0007669"/>
    <property type="project" value="UniProtKB-UniRule"/>
</dbReference>
<dbReference type="GO" id="GO:0046933">
    <property type="term" value="F:proton-transporting ATP synthase activity, rotational mechanism"/>
    <property type="evidence" value="ECO:0007669"/>
    <property type="project" value="UniProtKB-UniRule"/>
</dbReference>
<dbReference type="CDD" id="cd18113">
    <property type="entry name" value="ATP-synt_F1_alpha_C"/>
    <property type="match status" value="1"/>
</dbReference>
<dbReference type="CDD" id="cd18116">
    <property type="entry name" value="ATP-synt_F1_alpha_N"/>
    <property type="match status" value="1"/>
</dbReference>
<dbReference type="CDD" id="cd01132">
    <property type="entry name" value="F1-ATPase_alpha_CD"/>
    <property type="match status" value="1"/>
</dbReference>
<dbReference type="FunFam" id="1.20.150.20:FF:000001">
    <property type="entry name" value="ATP synthase subunit alpha"/>
    <property type="match status" value="1"/>
</dbReference>
<dbReference type="FunFam" id="3.40.50.300:FF:000002">
    <property type="entry name" value="ATP synthase subunit alpha"/>
    <property type="match status" value="1"/>
</dbReference>
<dbReference type="Gene3D" id="2.40.30.20">
    <property type="match status" value="1"/>
</dbReference>
<dbReference type="Gene3D" id="1.20.150.20">
    <property type="entry name" value="ATP synthase alpha/beta chain, C-terminal domain"/>
    <property type="match status" value="1"/>
</dbReference>
<dbReference type="Gene3D" id="3.40.50.300">
    <property type="entry name" value="P-loop containing nucleotide triphosphate hydrolases"/>
    <property type="match status" value="1"/>
</dbReference>
<dbReference type="HAMAP" id="MF_01346">
    <property type="entry name" value="ATP_synth_alpha_bact"/>
    <property type="match status" value="1"/>
</dbReference>
<dbReference type="InterPro" id="IPR023366">
    <property type="entry name" value="ATP_synth_asu-like_sf"/>
</dbReference>
<dbReference type="InterPro" id="IPR000793">
    <property type="entry name" value="ATP_synth_asu_C"/>
</dbReference>
<dbReference type="InterPro" id="IPR038376">
    <property type="entry name" value="ATP_synth_asu_C_sf"/>
</dbReference>
<dbReference type="InterPro" id="IPR033732">
    <property type="entry name" value="ATP_synth_F1_a_nt-bd_dom"/>
</dbReference>
<dbReference type="InterPro" id="IPR005294">
    <property type="entry name" value="ATP_synth_F1_asu"/>
</dbReference>
<dbReference type="InterPro" id="IPR020003">
    <property type="entry name" value="ATPase_a/bsu_AS"/>
</dbReference>
<dbReference type="InterPro" id="IPR004100">
    <property type="entry name" value="ATPase_F1/V1/A1_a/bsu_N"/>
</dbReference>
<dbReference type="InterPro" id="IPR036121">
    <property type="entry name" value="ATPase_F1/V1/A1_a/bsu_N_sf"/>
</dbReference>
<dbReference type="InterPro" id="IPR000194">
    <property type="entry name" value="ATPase_F1/V1/A1_a/bsu_nucl-bd"/>
</dbReference>
<dbReference type="InterPro" id="IPR027417">
    <property type="entry name" value="P-loop_NTPase"/>
</dbReference>
<dbReference type="NCBIfam" id="TIGR00962">
    <property type="entry name" value="atpA"/>
    <property type="match status" value="1"/>
</dbReference>
<dbReference type="NCBIfam" id="NF009884">
    <property type="entry name" value="PRK13343.1"/>
    <property type="match status" value="1"/>
</dbReference>
<dbReference type="PANTHER" id="PTHR48082">
    <property type="entry name" value="ATP SYNTHASE SUBUNIT ALPHA, MITOCHONDRIAL"/>
    <property type="match status" value="1"/>
</dbReference>
<dbReference type="PANTHER" id="PTHR48082:SF2">
    <property type="entry name" value="ATP SYNTHASE SUBUNIT ALPHA, MITOCHONDRIAL"/>
    <property type="match status" value="1"/>
</dbReference>
<dbReference type="Pfam" id="PF00006">
    <property type="entry name" value="ATP-synt_ab"/>
    <property type="match status" value="1"/>
</dbReference>
<dbReference type="Pfam" id="PF00306">
    <property type="entry name" value="ATP-synt_ab_C"/>
    <property type="match status" value="1"/>
</dbReference>
<dbReference type="Pfam" id="PF02874">
    <property type="entry name" value="ATP-synt_ab_N"/>
    <property type="match status" value="1"/>
</dbReference>
<dbReference type="SUPFAM" id="SSF47917">
    <property type="entry name" value="C-terminal domain of alpha and beta subunits of F1 ATP synthase"/>
    <property type="match status" value="1"/>
</dbReference>
<dbReference type="SUPFAM" id="SSF50615">
    <property type="entry name" value="N-terminal domain of alpha and beta subunits of F1 ATP synthase"/>
    <property type="match status" value="1"/>
</dbReference>
<dbReference type="SUPFAM" id="SSF52540">
    <property type="entry name" value="P-loop containing nucleoside triphosphate hydrolases"/>
    <property type="match status" value="1"/>
</dbReference>
<dbReference type="PROSITE" id="PS00152">
    <property type="entry name" value="ATPASE_ALPHA_BETA"/>
    <property type="match status" value="1"/>
</dbReference>
<keyword id="KW-0066">ATP synthesis</keyword>
<keyword id="KW-0067">ATP-binding</keyword>
<keyword id="KW-1003">Cell membrane</keyword>
<keyword id="KW-0139">CF(1)</keyword>
<keyword id="KW-0375">Hydrogen ion transport</keyword>
<keyword id="KW-0406">Ion transport</keyword>
<keyword id="KW-0472">Membrane</keyword>
<keyword id="KW-0547">Nucleotide-binding</keyword>
<keyword id="KW-1185">Reference proteome</keyword>
<keyword id="KW-1278">Translocase</keyword>
<keyword id="KW-0813">Transport</keyword>
<feature type="chain" id="PRO_1000214804" description="ATP synthase subunit alpha">
    <location>
        <begin position="1"/>
        <end position="544"/>
    </location>
</feature>
<feature type="region of interest" description="Disordered" evidence="2">
    <location>
        <begin position="513"/>
        <end position="544"/>
    </location>
</feature>
<feature type="compositionally biased region" description="Acidic residues" evidence="2">
    <location>
        <begin position="524"/>
        <end position="535"/>
    </location>
</feature>
<feature type="binding site" evidence="1">
    <location>
        <begin position="173"/>
        <end position="180"/>
    </location>
    <ligand>
        <name>ATP</name>
        <dbReference type="ChEBI" id="CHEBI:30616"/>
    </ligand>
</feature>
<feature type="site" description="Required for activity" evidence="1">
    <location>
        <position position="374"/>
    </location>
</feature>
<sequence length="544" mass="58548">MAELTIKPEEIRAALDSFVNSYEPSASAREEVGRVTLAADGIAEVEGLPGAMANELLQFEDGTLGLALNLDVRHIGVVVLGEFTGIEEGQEVRRTGEVLSVPVGDGYLGRVVDPLGNPIDGLGDVETEGRRALELQAPGVMARKSVHEPLQTGIKAIDSMIPIGRGQRQLIIGDRQTGKTAIAIDTILNQKANWDSGDPSKQVRCVYVAIGQKGSTIASVRGALEDAGALEYTTIVAAPASDPAGFKYLAPYTGSAIGQHWMYQGKHVLIVFDDLSKQAEAYRAVSLLLRRPPGREAYPGDVFYLHSRLLERCAKLSDELGAGSMTGLPIIETKANDVSAYIPTNVISITDGQIFLQSDLFNANQRPAVDVGISVSRVGGDAQVKGMKKVSGTLKLELAQYRSLEAFAMFASDLDAASRAQLKRGAALTELLKQPQYSPFAVEDQVAMIWSGTNGYLDDVETADIHRFESELLDHLRRHTSVLDDIASSGLLTDETEEALRNGVESFRRTFAGSDGQIIGGGEPESDGEDVDVEQEQIVRQKRG</sequence>
<organism>
    <name type="scientific">Beutenbergia cavernae (strain ATCC BAA-8 / DSM 12333 / CCUG 43141 / JCM 11478 / NBRC 16432 / NCIMB 13614 / HKI 0122)</name>
    <dbReference type="NCBI Taxonomy" id="471853"/>
    <lineage>
        <taxon>Bacteria</taxon>
        <taxon>Bacillati</taxon>
        <taxon>Actinomycetota</taxon>
        <taxon>Actinomycetes</taxon>
        <taxon>Micrococcales</taxon>
        <taxon>Beutenbergiaceae</taxon>
        <taxon>Beutenbergia</taxon>
    </lineage>
</organism>
<gene>
    <name evidence="1" type="primary">atpA</name>
    <name type="ordered locus">Bcav_1305</name>
</gene>